<evidence type="ECO:0000255" key="1">
    <source>
        <dbReference type="HAMAP-Rule" id="MF_00530"/>
    </source>
</evidence>
<organism>
    <name type="scientific">Granulibacter bethesdensis (strain ATCC BAA-1260 / CGDNIH1)</name>
    <dbReference type="NCBI Taxonomy" id="391165"/>
    <lineage>
        <taxon>Bacteria</taxon>
        <taxon>Pseudomonadati</taxon>
        <taxon>Pseudomonadota</taxon>
        <taxon>Alphaproteobacteria</taxon>
        <taxon>Acetobacterales</taxon>
        <taxon>Acetobacteraceae</taxon>
        <taxon>Granulibacter</taxon>
    </lineage>
</organism>
<name>ATPE_GRABC</name>
<feature type="chain" id="PRO_0000265819" description="ATP synthase epsilon chain">
    <location>
        <begin position="1"/>
        <end position="135"/>
    </location>
</feature>
<accession>Q0BQE9</accession>
<protein>
    <recommendedName>
        <fullName evidence="1">ATP synthase epsilon chain</fullName>
    </recommendedName>
    <alternativeName>
        <fullName evidence="1">ATP synthase F1 sector epsilon subunit</fullName>
    </alternativeName>
    <alternativeName>
        <fullName evidence="1">F-ATPase epsilon subunit</fullName>
    </alternativeName>
</protein>
<sequence>MAQTSLEIVSPEKRLLSRSVDMVVIPAAEGELGVLPGHAPMIVLLQGGTIRLYQNGQVTDRLYVAGGFAEITPERCTVLADQARPVAEISATEAEKRLADAEAAYATVDKLDITALDAAMESIQAARAMVEAARH</sequence>
<reference key="1">
    <citation type="journal article" date="2007" name="J. Bacteriol.">
        <title>Genome sequence analysis of the emerging human pathogenic acetic acid bacterium Granulibacter bethesdensis.</title>
        <authorList>
            <person name="Greenberg D.E."/>
            <person name="Porcella S.F."/>
            <person name="Zelazny A.M."/>
            <person name="Virtaneva K."/>
            <person name="Sturdevant D.E."/>
            <person name="Kupko J.J. III"/>
            <person name="Barbian K.D."/>
            <person name="Babar A."/>
            <person name="Dorward D.W."/>
            <person name="Holland S.M."/>
        </authorList>
    </citation>
    <scope>NUCLEOTIDE SEQUENCE [LARGE SCALE GENOMIC DNA]</scope>
    <source>
        <strain>ATCC BAA-1260 / CGDNIH1</strain>
    </source>
</reference>
<gene>
    <name evidence="1" type="primary">atpC</name>
    <name type="ordered locus">GbCGDNIH1_2055</name>
</gene>
<dbReference type="EMBL" id="CP000394">
    <property type="protein sequence ID" value="ABI62953.1"/>
    <property type="molecule type" value="Genomic_DNA"/>
</dbReference>
<dbReference type="RefSeq" id="WP_011632755.1">
    <property type="nucleotide sequence ID" value="NC_008343.2"/>
</dbReference>
<dbReference type="SMR" id="Q0BQE9"/>
<dbReference type="STRING" id="391165.GbCGDNIH1_2055"/>
<dbReference type="KEGG" id="gbe:GbCGDNIH1_2055"/>
<dbReference type="eggNOG" id="COG0355">
    <property type="taxonomic scope" value="Bacteria"/>
</dbReference>
<dbReference type="HOGENOM" id="CLU_084338_2_1_5"/>
<dbReference type="OrthoDB" id="9799969at2"/>
<dbReference type="Proteomes" id="UP000001963">
    <property type="component" value="Chromosome"/>
</dbReference>
<dbReference type="GO" id="GO:0005886">
    <property type="term" value="C:plasma membrane"/>
    <property type="evidence" value="ECO:0007669"/>
    <property type="project" value="UniProtKB-SubCell"/>
</dbReference>
<dbReference type="GO" id="GO:0045259">
    <property type="term" value="C:proton-transporting ATP synthase complex"/>
    <property type="evidence" value="ECO:0007669"/>
    <property type="project" value="UniProtKB-KW"/>
</dbReference>
<dbReference type="GO" id="GO:0005524">
    <property type="term" value="F:ATP binding"/>
    <property type="evidence" value="ECO:0007669"/>
    <property type="project" value="UniProtKB-UniRule"/>
</dbReference>
<dbReference type="GO" id="GO:0046933">
    <property type="term" value="F:proton-transporting ATP synthase activity, rotational mechanism"/>
    <property type="evidence" value="ECO:0007669"/>
    <property type="project" value="UniProtKB-UniRule"/>
</dbReference>
<dbReference type="CDD" id="cd12152">
    <property type="entry name" value="F1-ATPase_delta"/>
    <property type="match status" value="1"/>
</dbReference>
<dbReference type="Gene3D" id="2.60.15.10">
    <property type="entry name" value="F0F1 ATP synthase delta/epsilon subunit, N-terminal"/>
    <property type="match status" value="1"/>
</dbReference>
<dbReference type="HAMAP" id="MF_00530">
    <property type="entry name" value="ATP_synth_epsil_bac"/>
    <property type="match status" value="1"/>
</dbReference>
<dbReference type="InterPro" id="IPR001469">
    <property type="entry name" value="ATP_synth_F1_dsu/esu"/>
</dbReference>
<dbReference type="InterPro" id="IPR020546">
    <property type="entry name" value="ATP_synth_F1_dsu/esu_N"/>
</dbReference>
<dbReference type="InterPro" id="IPR036771">
    <property type="entry name" value="ATPsynth_dsu/esu_N"/>
</dbReference>
<dbReference type="NCBIfam" id="TIGR01216">
    <property type="entry name" value="ATP_synt_epsi"/>
    <property type="match status" value="1"/>
</dbReference>
<dbReference type="PANTHER" id="PTHR13822">
    <property type="entry name" value="ATP SYNTHASE DELTA/EPSILON CHAIN"/>
    <property type="match status" value="1"/>
</dbReference>
<dbReference type="PANTHER" id="PTHR13822:SF10">
    <property type="entry name" value="ATP SYNTHASE EPSILON CHAIN, CHLOROPLASTIC"/>
    <property type="match status" value="1"/>
</dbReference>
<dbReference type="Pfam" id="PF02823">
    <property type="entry name" value="ATP-synt_DE_N"/>
    <property type="match status" value="1"/>
</dbReference>
<dbReference type="SUPFAM" id="SSF51344">
    <property type="entry name" value="Epsilon subunit of F1F0-ATP synthase N-terminal domain"/>
    <property type="match status" value="1"/>
</dbReference>
<keyword id="KW-0066">ATP synthesis</keyword>
<keyword id="KW-0997">Cell inner membrane</keyword>
<keyword id="KW-1003">Cell membrane</keyword>
<keyword id="KW-0139">CF(1)</keyword>
<keyword id="KW-0375">Hydrogen ion transport</keyword>
<keyword id="KW-0406">Ion transport</keyword>
<keyword id="KW-0472">Membrane</keyword>
<keyword id="KW-1185">Reference proteome</keyword>
<keyword id="KW-0813">Transport</keyword>
<comment type="function">
    <text evidence="1">Produces ATP from ADP in the presence of a proton gradient across the membrane.</text>
</comment>
<comment type="subunit">
    <text>F-type ATPases have 2 components, CF(1) - the catalytic core - and CF(0) - the membrane proton channel. CF(1) has five subunits: alpha(3), beta(3), gamma(1), delta(1), epsilon(1). CF(0) has three main subunits: a, b and c.</text>
</comment>
<comment type="subcellular location">
    <subcellularLocation>
        <location evidence="1">Cell inner membrane</location>
        <topology evidence="1">Peripheral membrane protein</topology>
    </subcellularLocation>
</comment>
<comment type="similarity">
    <text evidence="1">Belongs to the ATPase epsilon chain family.</text>
</comment>
<proteinExistence type="inferred from homology"/>